<evidence type="ECO:0000255" key="1">
    <source>
        <dbReference type="HAMAP-Rule" id="MF_01363"/>
    </source>
</evidence>
<evidence type="ECO:0000305" key="2"/>
<organism>
    <name type="scientific">Mycoplasmopsis agalactiae (strain NCTC 10123 / CIP 59.7 / PG2)</name>
    <name type="common">Mycoplasma agalactiae</name>
    <dbReference type="NCBI Taxonomy" id="347257"/>
    <lineage>
        <taxon>Bacteria</taxon>
        <taxon>Bacillati</taxon>
        <taxon>Mycoplasmatota</taxon>
        <taxon>Mycoplasmoidales</taxon>
        <taxon>Metamycoplasmataceae</taxon>
        <taxon>Mycoplasmopsis</taxon>
    </lineage>
</organism>
<proteinExistence type="inferred from homology"/>
<dbReference type="EMBL" id="CU179680">
    <property type="protein sequence ID" value="CAL59255.1"/>
    <property type="molecule type" value="Genomic_DNA"/>
</dbReference>
<dbReference type="RefSeq" id="WP_011949713.1">
    <property type="nucleotide sequence ID" value="NC_009497.1"/>
</dbReference>
<dbReference type="SMR" id="A5IYZ6"/>
<dbReference type="STRING" id="347257.MAG5550"/>
<dbReference type="GeneID" id="93358298"/>
<dbReference type="KEGG" id="maa:MAG5550"/>
<dbReference type="HOGENOM" id="CLU_061463_3_2_14"/>
<dbReference type="Proteomes" id="UP000007065">
    <property type="component" value="Chromosome"/>
</dbReference>
<dbReference type="GO" id="GO:0005737">
    <property type="term" value="C:cytoplasm"/>
    <property type="evidence" value="ECO:0007669"/>
    <property type="project" value="UniProtKB-ARBA"/>
</dbReference>
<dbReference type="GO" id="GO:1990904">
    <property type="term" value="C:ribonucleoprotein complex"/>
    <property type="evidence" value="ECO:0007669"/>
    <property type="project" value="UniProtKB-KW"/>
</dbReference>
<dbReference type="GO" id="GO:0005840">
    <property type="term" value="C:ribosome"/>
    <property type="evidence" value="ECO:0007669"/>
    <property type="project" value="UniProtKB-KW"/>
</dbReference>
<dbReference type="GO" id="GO:0019843">
    <property type="term" value="F:rRNA binding"/>
    <property type="evidence" value="ECO:0007669"/>
    <property type="project" value="UniProtKB-UniRule"/>
</dbReference>
<dbReference type="GO" id="GO:0003735">
    <property type="term" value="F:structural constituent of ribosome"/>
    <property type="evidence" value="ECO:0007669"/>
    <property type="project" value="InterPro"/>
</dbReference>
<dbReference type="GO" id="GO:0006412">
    <property type="term" value="P:translation"/>
    <property type="evidence" value="ECO:0007669"/>
    <property type="project" value="UniProtKB-UniRule"/>
</dbReference>
<dbReference type="HAMAP" id="MF_01363">
    <property type="entry name" value="Ribosomal_bL21"/>
    <property type="match status" value="1"/>
</dbReference>
<dbReference type="InterPro" id="IPR028909">
    <property type="entry name" value="bL21-like"/>
</dbReference>
<dbReference type="InterPro" id="IPR036164">
    <property type="entry name" value="bL21-like_sf"/>
</dbReference>
<dbReference type="InterPro" id="IPR001787">
    <property type="entry name" value="Ribosomal_bL21"/>
</dbReference>
<dbReference type="NCBIfam" id="TIGR00061">
    <property type="entry name" value="L21"/>
    <property type="match status" value="1"/>
</dbReference>
<dbReference type="PANTHER" id="PTHR21349">
    <property type="entry name" value="50S RIBOSOMAL PROTEIN L21"/>
    <property type="match status" value="1"/>
</dbReference>
<dbReference type="PANTHER" id="PTHR21349:SF0">
    <property type="entry name" value="LARGE RIBOSOMAL SUBUNIT PROTEIN BL21M"/>
    <property type="match status" value="1"/>
</dbReference>
<dbReference type="Pfam" id="PF00829">
    <property type="entry name" value="Ribosomal_L21p"/>
    <property type="match status" value="1"/>
</dbReference>
<dbReference type="SUPFAM" id="SSF141091">
    <property type="entry name" value="L21p-like"/>
    <property type="match status" value="1"/>
</dbReference>
<keyword id="KW-1185">Reference proteome</keyword>
<keyword id="KW-0687">Ribonucleoprotein</keyword>
<keyword id="KW-0689">Ribosomal protein</keyword>
<keyword id="KW-0694">RNA-binding</keyword>
<keyword id="KW-0699">rRNA-binding</keyword>
<name>RL21_MYCAP</name>
<accession>A5IYZ6</accession>
<comment type="function">
    <text evidence="1">This protein binds to 23S rRNA in the presence of protein L20.</text>
</comment>
<comment type="subunit">
    <text evidence="1">Part of the 50S ribosomal subunit. Contacts protein L20.</text>
</comment>
<comment type="similarity">
    <text evidence="1">Belongs to the bacterial ribosomal protein bL21 family.</text>
</comment>
<reference key="1">
    <citation type="journal article" date="2007" name="PLoS Genet.">
        <title>Being pathogenic, plastic, and sexual while living with a nearly minimal bacterial genome.</title>
        <authorList>
            <person name="Sirand-Pugnet P."/>
            <person name="Lartigue C."/>
            <person name="Marenda M."/>
            <person name="Jacob D."/>
            <person name="Barre A."/>
            <person name="Barbe V."/>
            <person name="Schenowitz C."/>
            <person name="Mangenot S."/>
            <person name="Couloux A."/>
            <person name="Segurens B."/>
            <person name="de Daruvar A."/>
            <person name="Blanchard A."/>
            <person name="Citti C."/>
        </authorList>
    </citation>
    <scope>NUCLEOTIDE SEQUENCE [LARGE SCALE GENOMIC DNA]</scope>
    <source>
        <strain>NCTC 10123 / CIP 59.7 / PG2</strain>
    </source>
</reference>
<gene>
    <name evidence="1" type="primary">rplU</name>
    <name type="ordered locus">MAG5550</name>
</gene>
<feature type="chain" id="PRO_1000143824" description="Large ribosomal subunit protein bL21">
    <location>
        <begin position="1"/>
        <end position="99"/>
    </location>
</feature>
<protein>
    <recommendedName>
        <fullName evidence="1">Large ribosomal subunit protein bL21</fullName>
    </recommendedName>
    <alternativeName>
        <fullName evidence="2">50S ribosomal protein L21</fullName>
    </alternativeName>
</protein>
<sequence>MIAIIETGGKQILVKEGETIFIEKIEGAEGSKVTFDKVLLLDNKIGKPYVESAKVIGEIQKQGKAKKIVVYRHNAKSTHKRKLGHRQPYTRVKITGIVG</sequence>